<dbReference type="EMBL" id="AJ005566">
    <property type="protein sequence ID" value="CAA06595.1"/>
    <property type="molecule type" value="mRNA"/>
</dbReference>
<dbReference type="EMBL" id="AY158992">
    <property type="protein sequence ID" value="AAN86829.1"/>
    <property type="molecule type" value="mRNA"/>
</dbReference>
<dbReference type="CCDS" id="CCDS17553.1"/>
<dbReference type="RefSeq" id="NP_035604.1">
    <property type="nucleotide sequence ID" value="NM_011474.4"/>
</dbReference>
<dbReference type="FunCoup" id="O70559">
    <property type="interactions" value="353"/>
</dbReference>
<dbReference type="STRING" id="10090.ENSMUSP00000053849"/>
<dbReference type="iPTMnet" id="O70559"/>
<dbReference type="PaxDb" id="10090-ENSMUSP00000053849"/>
<dbReference type="ProteomicsDB" id="263322"/>
<dbReference type="Pumba" id="O70559"/>
<dbReference type="DNASU" id="20762"/>
<dbReference type="Ensembl" id="ENSMUST00000059845.2">
    <property type="protein sequence ID" value="ENSMUSP00000053849.2"/>
    <property type="gene ID" value="ENSMUSG00000046259.3"/>
</dbReference>
<dbReference type="GeneID" id="20762"/>
<dbReference type="KEGG" id="mmu:20762"/>
<dbReference type="UCSC" id="uc008qdx.1">
    <property type="organism name" value="mouse"/>
</dbReference>
<dbReference type="AGR" id="MGI:1330343"/>
<dbReference type="CTD" id="20762"/>
<dbReference type="MGI" id="MGI:1330343">
    <property type="gene designation" value="Sprr2h"/>
</dbReference>
<dbReference type="VEuPathDB" id="HostDB:ENSMUSG00000046259"/>
<dbReference type="eggNOG" id="ENOG502TEHF">
    <property type="taxonomic scope" value="Eukaryota"/>
</dbReference>
<dbReference type="GeneTree" id="ENSGT01110000267744"/>
<dbReference type="HOGENOM" id="CLU_136290_0_0_1"/>
<dbReference type="InParanoid" id="O70559"/>
<dbReference type="OMA" id="PECLPPD"/>
<dbReference type="BioGRID-ORCS" id="20762">
    <property type="hits" value="1 hit in 77 CRISPR screens"/>
</dbReference>
<dbReference type="PRO" id="PR:O70559"/>
<dbReference type="Proteomes" id="UP000000589">
    <property type="component" value="Chromosome 3"/>
</dbReference>
<dbReference type="RNAct" id="O70559">
    <property type="molecule type" value="protein"/>
</dbReference>
<dbReference type="Bgee" id="ENSMUSG00000046259">
    <property type="expression patterns" value="Expressed in gastrula and 18 other cell types or tissues"/>
</dbReference>
<dbReference type="ExpressionAtlas" id="O70559">
    <property type="expression patterns" value="baseline and differential"/>
</dbReference>
<dbReference type="GO" id="GO:0001533">
    <property type="term" value="C:cornified envelope"/>
    <property type="evidence" value="ECO:0000303"/>
    <property type="project" value="UniProtKB"/>
</dbReference>
<dbReference type="GO" id="GO:0005737">
    <property type="term" value="C:cytoplasm"/>
    <property type="evidence" value="ECO:0007669"/>
    <property type="project" value="UniProtKB-SubCell"/>
</dbReference>
<dbReference type="GO" id="GO:0008544">
    <property type="term" value="P:epidermis development"/>
    <property type="evidence" value="ECO:0000303"/>
    <property type="project" value="UniProtKB"/>
</dbReference>
<dbReference type="GO" id="GO:0031424">
    <property type="term" value="P:keratinization"/>
    <property type="evidence" value="ECO:0007669"/>
    <property type="project" value="UniProtKB-KW"/>
</dbReference>
<dbReference type="GO" id="GO:0030216">
    <property type="term" value="P:keratinocyte differentiation"/>
    <property type="evidence" value="ECO:0000303"/>
    <property type="project" value="UniProtKB"/>
</dbReference>
<dbReference type="InterPro" id="IPR029142">
    <property type="entry name" value="SPRR2"/>
</dbReference>
<dbReference type="Pfam" id="PF14820">
    <property type="entry name" value="SPRR2"/>
    <property type="match status" value="2"/>
</dbReference>
<dbReference type="PRINTS" id="PR01217">
    <property type="entry name" value="PRICHEXTENSN"/>
</dbReference>
<dbReference type="PRINTS" id="PR00021">
    <property type="entry name" value="PRORICH"/>
</dbReference>
<gene>
    <name type="primary">Sprr2h</name>
</gene>
<sequence length="108" mass="11720">MSYQQQQCKQPCQPPPVCPPPQCPEPCPPPKCPEPCPPPKCTEPCPPPKCPEPCPPPKCPEPCPPPKCPEPCPPPKCTEPCPPPSYQQKCPSVQPSPPCQQKCPPKNK</sequence>
<keyword id="KW-0963">Cytoplasm</keyword>
<keyword id="KW-0417">Keratinization</keyword>
<keyword id="KW-1185">Reference proteome</keyword>
<keyword id="KW-0677">Repeat</keyword>
<proteinExistence type="evidence at transcript level"/>
<organism>
    <name type="scientific">Mus musculus</name>
    <name type="common">Mouse</name>
    <dbReference type="NCBI Taxonomy" id="10090"/>
    <lineage>
        <taxon>Eukaryota</taxon>
        <taxon>Metazoa</taxon>
        <taxon>Chordata</taxon>
        <taxon>Craniata</taxon>
        <taxon>Vertebrata</taxon>
        <taxon>Euteleostomi</taxon>
        <taxon>Mammalia</taxon>
        <taxon>Eutheria</taxon>
        <taxon>Euarchontoglires</taxon>
        <taxon>Glires</taxon>
        <taxon>Rodentia</taxon>
        <taxon>Myomorpha</taxon>
        <taxon>Muroidea</taxon>
        <taxon>Muridae</taxon>
        <taxon>Murinae</taxon>
        <taxon>Mus</taxon>
        <taxon>Mus</taxon>
    </lineage>
</organism>
<accession>O70559</accession>
<reference key="1">
    <citation type="journal article" date="1999" name="Genomics">
        <title>Mouse Sprr2 genes: a clustered family of genes showing differential expression in epithelial tissues.</title>
        <authorList>
            <person name="Song H.J."/>
            <person name="Poy G."/>
            <person name="Darwiche N."/>
            <person name="Lichti U."/>
            <person name="Kuroki T."/>
            <person name="Steinert P.M."/>
            <person name="Kartasova T."/>
        </authorList>
    </citation>
    <scope>NUCLEOTIDE SEQUENCE [MRNA]</scope>
    <source>
        <strain>CD-1</strain>
    </source>
</reference>
<reference key="2">
    <citation type="journal article" date="2003" name="Mamm. Genome">
        <title>Mouse Sprr locus: a tandem array of coordinately regulated genes.</title>
        <authorList>
            <person name="Patel S."/>
            <person name="Kartasova T."/>
            <person name="Segre J.A."/>
        </authorList>
    </citation>
    <scope>NUCLEOTIDE SEQUENCE [MRNA]</scope>
    <source>
        <strain>C57BL/6J</strain>
    </source>
</reference>
<reference key="3">
    <citation type="journal article" date="2004" name="Mol. Cells">
        <title>Estrogen regulates the expression of the small proline-rich 2 gene family in the mouse uterus.</title>
        <authorList>
            <person name="Hong S.H."/>
            <person name="Nah H.Y."/>
            <person name="Lee J.Y."/>
            <person name="Lee Y.J."/>
            <person name="Lee J.W."/>
            <person name="Gye M.C."/>
            <person name="Kim C.H."/>
            <person name="Kang B.M."/>
            <person name="Kim M.K."/>
        </authorList>
    </citation>
    <scope>TISSUE SPECIFICITY</scope>
    <scope>DEVELOPMENTAL STAGE</scope>
</reference>
<name>SPR2H_MOUSE</name>
<feature type="chain" id="PRO_0000150020" description="Small proline-rich protein 2H">
    <location>
        <begin position="1"/>
        <end position="108"/>
    </location>
</feature>
<feature type="repeat" description="1">
    <location>
        <begin position="21"/>
        <end position="29"/>
    </location>
</feature>
<feature type="repeat" description="2">
    <location>
        <begin position="30"/>
        <end position="38"/>
    </location>
</feature>
<feature type="repeat" description="3">
    <location>
        <begin position="39"/>
        <end position="47"/>
    </location>
</feature>
<feature type="repeat" description="4">
    <location>
        <begin position="48"/>
        <end position="56"/>
    </location>
</feature>
<feature type="repeat" description="5">
    <location>
        <begin position="57"/>
        <end position="65"/>
    </location>
</feature>
<feature type="repeat" description="6">
    <location>
        <begin position="66"/>
        <end position="74"/>
    </location>
</feature>
<feature type="repeat" description="7">
    <location>
        <begin position="75"/>
        <end position="83"/>
    </location>
</feature>
<feature type="region of interest" description="Disordered" evidence="2">
    <location>
        <begin position="1"/>
        <end position="22"/>
    </location>
</feature>
<feature type="region of interest" description="7 X 9 AA tandem repeats of P-[KQ]-C-[PT]-E-P-C-P-P">
    <location>
        <begin position="21"/>
        <end position="83"/>
    </location>
</feature>
<feature type="region of interest" description="Disordered" evidence="2">
    <location>
        <begin position="83"/>
        <end position="108"/>
    </location>
</feature>
<feature type="compositionally biased region" description="Low complexity" evidence="2">
    <location>
        <begin position="1"/>
        <end position="11"/>
    </location>
</feature>
<feature type="compositionally biased region" description="Pro residues" evidence="2">
    <location>
        <begin position="12"/>
        <end position="22"/>
    </location>
</feature>
<feature type="compositionally biased region" description="Low complexity" evidence="2">
    <location>
        <begin position="87"/>
        <end position="108"/>
    </location>
</feature>
<protein>
    <recommendedName>
        <fullName>Small proline-rich protein 2H</fullName>
    </recommendedName>
</protein>
<comment type="function">
    <text evidence="1">Cross-linked envelope protein of keratinocytes. It is a keratinocyte protein that first appears in the cell cytosol, but ultimately becomes cross-linked to membrane proteins by transglutaminase. All that results in the formation of an insoluble envelope beneath the plasma membrane (By similarity).</text>
</comment>
<comment type="subcellular location">
    <subcellularLocation>
        <location evidence="1">Cytoplasm</location>
    </subcellularLocation>
</comment>
<comment type="tissue specificity">
    <text evidence="3">Expressed weakly in uterus.</text>
</comment>
<comment type="developmental stage">
    <text evidence="3">During early pregnancy, low expression detected in uterus at 1 dpc.</text>
</comment>
<comment type="similarity">
    <text evidence="4">Belongs to the cornifin (SPRR) family.</text>
</comment>
<evidence type="ECO:0000250" key="1"/>
<evidence type="ECO:0000256" key="2">
    <source>
        <dbReference type="SAM" id="MobiDB-lite"/>
    </source>
</evidence>
<evidence type="ECO:0000269" key="3">
    <source>
    </source>
</evidence>
<evidence type="ECO:0000305" key="4"/>